<feature type="chain" id="PRO_0000361044" description="Probable replication factor A 73 kDa subunit">
    <location>
        <begin position="1"/>
        <end position="658"/>
    </location>
</feature>
<feature type="DNA-binding region" description="OB" evidence="4">
    <location>
        <begin position="236"/>
        <end position="326"/>
    </location>
</feature>
<feature type="zinc finger region" description="C4-type" evidence="3 4">
    <location>
        <begin position="518"/>
        <end position="539"/>
    </location>
</feature>
<feature type="region of interest" description="Disordered" evidence="5">
    <location>
        <begin position="134"/>
        <end position="155"/>
    </location>
</feature>
<feature type="region of interest" description="Disordered" evidence="5">
    <location>
        <begin position="169"/>
        <end position="222"/>
    </location>
</feature>
<dbReference type="EMBL" id="AJ131134">
    <property type="protein sequence ID" value="CAA10310.1"/>
    <property type="molecule type" value="Genomic_DNA"/>
</dbReference>
<dbReference type="EMBL" id="AJ131634">
    <property type="protein sequence ID" value="CAA10466.1"/>
    <property type="molecule type" value="Genomic_DNA"/>
</dbReference>
<dbReference type="EMBL" id="HE600938">
    <property type="protein sequence ID" value="CAP31894.1"/>
    <property type="molecule type" value="Genomic_DNA"/>
</dbReference>
<dbReference type="SMR" id="O97472"/>
<dbReference type="FunCoup" id="O97472">
    <property type="interactions" value="2893"/>
</dbReference>
<dbReference type="STRING" id="6238.O97472"/>
<dbReference type="EnsemblMetazoa" id="CBG13026.1">
    <property type="protein sequence ID" value="CBG13026.1"/>
    <property type="gene ID" value="WBGene00033864"/>
</dbReference>
<dbReference type="KEGG" id="cbr:CBG_13026"/>
<dbReference type="CTD" id="8572089"/>
<dbReference type="WormBase" id="CBG13026">
    <property type="protein sequence ID" value="CBP03074"/>
    <property type="gene ID" value="WBGene00033864"/>
    <property type="gene designation" value="Cbr-rpa-1"/>
</dbReference>
<dbReference type="eggNOG" id="KOG0851">
    <property type="taxonomic scope" value="Eukaryota"/>
</dbReference>
<dbReference type="HOGENOM" id="CLU_012393_2_1_1"/>
<dbReference type="InParanoid" id="O97472"/>
<dbReference type="OMA" id="VIRAVFW"/>
<dbReference type="Proteomes" id="UP000008549">
    <property type="component" value="Unassembled WGS sequence"/>
</dbReference>
<dbReference type="GO" id="GO:0005662">
    <property type="term" value="C:DNA replication factor A complex"/>
    <property type="evidence" value="ECO:0000250"/>
    <property type="project" value="UniProtKB"/>
</dbReference>
<dbReference type="GO" id="GO:0005654">
    <property type="term" value="C:nucleoplasm"/>
    <property type="evidence" value="ECO:0007669"/>
    <property type="project" value="EnsemblMetazoa"/>
</dbReference>
<dbReference type="GO" id="GO:0005634">
    <property type="term" value="C:nucleus"/>
    <property type="evidence" value="ECO:0000250"/>
    <property type="project" value="UniProtKB"/>
</dbReference>
<dbReference type="GO" id="GO:0003684">
    <property type="term" value="F:damaged DNA binding"/>
    <property type="evidence" value="ECO:0000318"/>
    <property type="project" value="GO_Central"/>
</dbReference>
<dbReference type="GO" id="GO:0019899">
    <property type="term" value="F:enzyme binding"/>
    <property type="evidence" value="ECO:0007669"/>
    <property type="project" value="EnsemblMetazoa"/>
</dbReference>
<dbReference type="GO" id="GO:0003697">
    <property type="term" value="F:single-stranded DNA binding"/>
    <property type="evidence" value="ECO:0000250"/>
    <property type="project" value="UniProtKB"/>
</dbReference>
<dbReference type="GO" id="GO:0043047">
    <property type="term" value="F:single-stranded telomeric DNA binding"/>
    <property type="evidence" value="ECO:0000318"/>
    <property type="project" value="GO_Central"/>
</dbReference>
<dbReference type="GO" id="GO:0008270">
    <property type="term" value="F:zinc ion binding"/>
    <property type="evidence" value="ECO:0007669"/>
    <property type="project" value="UniProtKB-KW"/>
</dbReference>
<dbReference type="GO" id="GO:0006260">
    <property type="term" value="P:DNA replication"/>
    <property type="evidence" value="ECO:0000250"/>
    <property type="project" value="UniProtKB"/>
</dbReference>
<dbReference type="GO" id="GO:0000724">
    <property type="term" value="P:double-strand break repair via homologous recombination"/>
    <property type="evidence" value="ECO:0000318"/>
    <property type="project" value="GO_Central"/>
</dbReference>
<dbReference type="GO" id="GO:0051321">
    <property type="term" value="P:meiotic cell cycle"/>
    <property type="evidence" value="ECO:0000318"/>
    <property type="project" value="GO_Central"/>
</dbReference>
<dbReference type="GO" id="GO:0006289">
    <property type="term" value="P:nucleotide-excision repair"/>
    <property type="evidence" value="ECO:0000318"/>
    <property type="project" value="GO_Central"/>
</dbReference>
<dbReference type="GO" id="GO:0110039">
    <property type="term" value="P:positive regulation of nematode male tail tip morphogenesis"/>
    <property type="evidence" value="ECO:0007669"/>
    <property type="project" value="EnsemblMetazoa"/>
</dbReference>
<dbReference type="GO" id="GO:0007004">
    <property type="term" value="P:telomere maintenance via telomerase"/>
    <property type="evidence" value="ECO:0000318"/>
    <property type="project" value="GO_Central"/>
</dbReference>
<dbReference type="CDD" id="cd04474">
    <property type="entry name" value="RPA1_DBD_A"/>
    <property type="match status" value="1"/>
</dbReference>
<dbReference type="CDD" id="cd04475">
    <property type="entry name" value="RPA1_DBD_B"/>
    <property type="match status" value="1"/>
</dbReference>
<dbReference type="CDD" id="cd04476">
    <property type="entry name" value="RPA1_DBD_C"/>
    <property type="match status" value="1"/>
</dbReference>
<dbReference type="FunFam" id="2.40.50.140:FF:000041">
    <property type="entry name" value="Replication protein A subunit"/>
    <property type="match status" value="1"/>
</dbReference>
<dbReference type="FunFam" id="2.40.50.140:FF:000090">
    <property type="entry name" value="Replication protein A subunit"/>
    <property type="match status" value="1"/>
</dbReference>
<dbReference type="Gene3D" id="2.40.50.140">
    <property type="entry name" value="Nucleic acid-binding proteins"/>
    <property type="match status" value="3"/>
</dbReference>
<dbReference type="InterPro" id="IPR047192">
    <property type="entry name" value="Euk_RPA1_DBD_C"/>
</dbReference>
<dbReference type="InterPro" id="IPR012340">
    <property type="entry name" value="NA-bd_OB-fold"/>
</dbReference>
<dbReference type="InterPro" id="IPR004365">
    <property type="entry name" value="NA-bd_OB_tRNA"/>
</dbReference>
<dbReference type="InterPro" id="IPR013955">
    <property type="entry name" value="Rep_factor-A_C"/>
</dbReference>
<dbReference type="InterPro" id="IPR031657">
    <property type="entry name" value="REPA_OB_2"/>
</dbReference>
<dbReference type="InterPro" id="IPR004591">
    <property type="entry name" value="Rfa1"/>
</dbReference>
<dbReference type="NCBIfam" id="TIGR00617">
    <property type="entry name" value="rpa1"/>
    <property type="match status" value="1"/>
</dbReference>
<dbReference type="PANTHER" id="PTHR47165">
    <property type="entry name" value="OS03G0429900 PROTEIN"/>
    <property type="match status" value="1"/>
</dbReference>
<dbReference type="PANTHER" id="PTHR47165:SF4">
    <property type="entry name" value="OS03G0429900 PROTEIN"/>
    <property type="match status" value="1"/>
</dbReference>
<dbReference type="Pfam" id="PF08646">
    <property type="entry name" value="Rep_fac-A_C"/>
    <property type="match status" value="1"/>
</dbReference>
<dbReference type="Pfam" id="PF16900">
    <property type="entry name" value="REPA_OB_2"/>
    <property type="match status" value="1"/>
</dbReference>
<dbReference type="Pfam" id="PF01336">
    <property type="entry name" value="tRNA_anti-codon"/>
    <property type="match status" value="1"/>
</dbReference>
<dbReference type="SUPFAM" id="SSF50249">
    <property type="entry name" value="Nucleic acid-binding proteins"/>
    <property type="match status" value="3"/>
</dbReference>
<comment type="function">
    <text evidence="2">As part of the heterotrimeric replication protein A complex (RPA/RP-A), binds and stabilizes single-stranded DNA intermediates, that form during DNA replication or upon DNA stress. It prevents their reannealing and in parallel, recruits and activates different proteins and complexes involved in DNA metabolism. Thereby, it plays an essential role both in DNA replication and the cellular response to DNA damage.</text>
</comment>
<comment type="subunit">
    <text evidence="1">Component of the heterotrimeric canonical replication protein A complex (RPA).</text>
</comment>
<comment type="subcellular location">
    <subcellularLocation>
        <location evidence="3">Nucleus</location>
    </subcellularLocation>
</comment>
<comment type="similarity">
    <text evidence="4">Belongs to the replication factor A protein 1 family.</text>
</comment>
<sequence>MTSIKISSDVFNKYHTNGKLRLSTGYVQEALEKQGYPGHDGVVQILKGKEDIGEQMGHGFTYRIRICDGIFQYNTLVSADIDDQIKREAEHLVEGAIIAITNLSTFSQGAGIKTSFLITGYTLLSRYHQTLSAPEVKPRSHSGNPAEHHGYRPNIVVEDVWPEAESITSEFQENMSNPPAAKMPKRESGGEASHNRVPAPEPHRSRAPPPPARRGPSNTERGVIPIAMVTPYVNNFRIHGMVSRKEDIKNIPAKNMKIFNFEITDSNGDTIRCTAFNETAESFHSTITENLSYYLSGGSVRQANKKFNNTGHDYEITLRNDSVVEAGGELLAAPKLNLKRVSLAEIAGHCGEMIDVLVIVEKMDAEATEFTSKAGKTLTKREMELIDESQALVRLTLWGDEAIKANVDDYHGKVIAFKGVIPREFNGGYSLGTGSGTRIIPVPEISGVSELYDWYTTEKPHSELKLISQTSGGMSEAPRTIAGLQEMQFGKDSDKGDYASVKAMITRINPNSALYKGCASEGCQKKVIESDGEYRCEKCNKSMNKFKWLYMMQFELSDETGQVYVTAFGDSAAKVVGKTAQEVGDLKDENLNEYNATFERLQFVPKMWRLRCKMETYNEEVRQKMTVFSVEEVNQDKYIENLKELIEQMKGIEDEGSY</sequence>
<organism>
    <name type="scientific">Caenorhabditis briggsae</name>
    <dbReference type="NCBI Taxonomy" id="6238"/>
    <lineage>
        <taxon>Eukaryota</taxon>
        <taxon>Metazoa</taxon>
        <taxon>Ecdysozoa</taxon>
        <taxon>Nematoda</taxon>
        <taxon>Chromadorea</taxon>
        <taxon>Rhabditida</taxon>
        <taxon>Rhabditina</taxon>
        <taxon>Rhabditomorpha</taxon>
        <taxon>Rhabditoidea</taxon>
        <taxon>Rhabditidae</taxon>
        <taxon>Peloderinae</taxon>
        <taxon>Caenorhabditis</taxon>
    </lineage>
</organism>
<reference evidence="6" key="1">
    <citation type="journal article" date="1999" name="Genetics">
        <title>lir-2, lir-1 and lin-26 encode a new class of zinc-finger proteins and are organized in two overlapping operons both in Caenorhabditis elegans and in Caenorhabditis briggsae.</title>
        <authorList>
            <person name="Dufourcq P."/>
            <person name="Chanal P."/>
            <person name="Vicaire S."/>
            <person name="Camut E."/>
            <person name="Quintin S."/>
            <person name="den Boer B.B.W."/>
            <person name="Bosher J.M."/>
            <person name="Labouesse M."/>
        </authorList>
    </citation>
    <scope>NUCLEOTIDE SEQUENCE [GENOMIC DNA]</scope>
</reference>
<reference evidence="7" key="2">
    <citation type="journal article" date="2003" name="PLoS Biol.">
        <title>The genome sequence of Caenorhabditis briggsae: a platform for comparative genomics.</title>
        <authorList>
            <person name="Stein L.D."/>
            <person name="Bao Z."/>
            <person name="Blasiar D."/>
            <person name="Blumenthal T."/>
            <person name="Brent M.R."/>
            <person name="Chen N."/>
            <person name="Chinwalla A."/>
            <person name="Clarke L."/>
            <person name="Clee C."/>
            <person name="Coghlan A."/>
            <person name="Coulson A."/>
            <person name="D'Eustachio P."/>
            <person name="Fitch D.H.A."/>
            <person name="Fulton L.A."/>
            <person name="Fulton R.E."/>
            <person name="Griffiths-Jones S."/>
            <person name="Harris T.W."/>
            <person name="Hillier L.W."/>
            <person name="Kamath R."/>
            <person name="Kuwabara P.E."/>
            <person name="Mardis E.R."/>
            <person name="Marra M.A."/>
            <person name="Miner T.L."/>
            <person name="Minx P."/>
            <person name="Mullikin J.C."/>
            <person name="Plumb R.W."/>
            <person name="Rogers J."/>
            <person name="Schein J.E."/>
            <person name="Sohrmann M."/>
            <person name="Spieth J."/>
            <person name="Stajich J.E."/>
            <person name="Wei C."/>
            <person name="Willey D."/>
            <person name="Wilson R.K."/>
            <person name="Durbin R.M."/>
            <person name="Waterston R.H."/>
        </authorList>
    </citation>
    <scope>NUCLEOTIDE SEQUENCE [LARGE SCALE GENOMIC DNA]</scope>
    <source>
        <strain evidence="7">AF16</strain>
    </source>
</reference>
<protein>
    <recommendedName>
        <fullName evidence="3">Probable replication factor A 73 kDa subunit</fullName>
    </recommendedName>
    <alternativeName>
        <fullName>RP-A p73</fullName>
    </alternativeName>
    <alternativeName>
        <fullName>Replication factor A protein 1</fullName>
        <shortName>RF-A protein 1</shortName>
    </alternativeName>
</protein>
<name>RFA1_CAEBR</name>
<accession>O97472</accession>
<keyword id="KW-0235">DNA replication</keyword>
<keyword id="KW-0238">DNA-binding</keyword>
<keyword id="KW-0479">Metal-binding</keyword>
<keyword id="KW-0539">Nucleus</keyword>
<keyword id="KW-1185">Reference proteome</keyword>
<keyword id="KW-0862">Zinc</keyword>
<keyword id="KW-0863">Zinc-finger</keyword>
<gene>
    <name evidence="7" type="primary">rpa-1</name>
    <name type="ORF">CBG13026</name>
</gene>
<evidence type="ECO:0000250" key="1"/>
<evidence type="ECO:0000250" key="2">
    <source>
        <dbReference type="UniProtKB" id="P27694"/>
    </source>
</evidence>
<evidence type="ECO:0000250" key="3">
    <source>
        <dbReference type="UniProtKB" id="Q19537"/>
    </source>
</evidence>
<evidence type="ECO:0000255" key="4"/>
<evidence type="ECO:0000256" key="5">
    <source>
        <dbReference type="SAM" id="MobiDB-lite"/>
    </source>
</evidence>
<evidence type="ECO:0000312" key="6">
    <source>
        <dbReference type="EMBL" id="CAA10310.1"/>
    </source>
</evidence>
<evidence type="ECO:0000312" key="7">
    <source>
        <dbReference type="EMBL" id="CAP31894.1"/>
    </source>
</evidence>
<proteinExistence type="inferred from homology"/>